<comment type="function">
    <text evidence="1">Catalyzes the phosphorolysis of maltose, leading to the formation of glucose and glucose 1-P.</text>
</comment>
<comment type="catalytic activity">
    <reaction>
        <text>D-maltose + phosphate = beta-D-glucose 1-phosphate + D-glucose</text>
        <dbReference type="Rhea" id="RHEA:21116"/>
        <dbReference type="ChEBI" id="CHEBI:4167"/>
        <dbReference type="ChEBI" id="CHEBI:17306"/>
        <dbReference type="ChEBI" id="CHEBI:43474"/>
        <dbReference type="ChEBI" id="CHEBI:57684"/>
        <dbReference type="EC" id="2.4.1.8"/>
    </reaction>
</comment>
<comment type="pathway">
    <text>Glycan degradation; maltose degradation.</text>
</comment>
<comment type="similarity">
    <text evidence="3">Belongs to the glycosyl hydrolase 65 family.</text>
</comment>
<dbReference type="EC" id="2.4.1.8"/>
<dbReference type="EMBL" id="Z94043">
    <property type="protein sequence ID" value="CAB08040.1"/>
    <property type="molecule type" value="Genomic_DNA"/>
</dbReference>
<dbReference type="EMBL" id="AL009126">
    <property type="protein sequence ID" value="CAB15462.1"/>
    <property type="molecule type" value="Genomic_DNA"/>
</dbReference>
<dbReference type="PIR" id="C70034">
    <property type="entry name" value="C70034"/>
</dbReference>
<dbReference type="RefSeq" id="NP_391337.1">
    <property type="nucleotide sequence ID" value="NC_000964.3"/>
</dbReference>
<dbReference type="RefSeq" id="WP_003243769.1">
    <property type="nucleotide sequence ID" value="NZ_OZ025638.1"/>
</dbReference>
<dbReference type="SMR" id="O06993"/>
<dbReference type="FunCoup" id="O06993">
    <property type="interactions" value="271"/>
</dbReference>
<dbReference type="IntAct" id="O06993">
    <property type="interactions" value="1"/>
</dbReference>
<dbReference type="STRING" id="224308.BSU34570"/>
<dbReference type="CAZy" id="GH65">
    <property type="family name" value="Glycoside Hydrolase Family 65"/>
</dbReference>
<dbReference type="PaxDb" id="224308-BSU34570"/>
<dbReference type="EnsemblBacteria" id="CAB15462">
    <property type="protein sequence ID" value="CAB15462"/>
    <property type="gene ID" value="BSU_34570"/>
</dbReference>
<dbReference type="GeneID" id="938621"/>
<dbReference type="KEGG" id="bsu:BSU34570"/>
<dbReference type="PATRIC" id="fig|224308.179.peg.3744"/>
<dbReference type="eggNOG" id="COG1554">
    <property type="taxonomic scope" value="Bacteria"/>
</dbReference>
<dbReference type="InParanoid" id="O06993"/>
<dbReference type="OrthoDB" id="9758855at2"/>
<dbReference type="PhylomeDB" id="O06993"/>
<dbReference type="BioCyc" id="BSUB:BSU34570-MONOMER"/>
<dbReference type="UniPathway" id="UPA00150"/>
<dbReference type="Proteomes" id="UP000001570">
    <property type="component" value="Chromosome"/>
</dbReference>
<dbReference type="GO" id="GO:0030246">
    <property type="term" value="F:carbohydrate binding"/>
    <property type="evidence" value="ECO:0007669"/>
    <property type="project" value="InterPro"/>
</dbReference>
<dbReference type="GO" id="GO:0004553">
    <property type="term" value="F:hydrolase activity, hydrolyzing O-glycosyl compounds"/>
    <property type="evidence" value="ECO:0000318"/>
    <property type="project" value="GO_Central"/>
</dbReference>
<dbReference type="GO" id="GO:0050082">
    <property type="term" value="F:maltose phosphorylase activity"/>
    <property type="evidence" value="ECO:0007669"/>
    <property type="project" value="UniProtKB-EC"/>
</dbReference>
<dbReference type="GO" id="GO:0005975">
    <property type="term" value="P:carbohydrate metabolic process"/>
    <property type="evidence" value="ECO:0000318"/>
    <property type="project" value="GO_Central"/>
</dbReference>
<dbReference type="GO" id="GO:0000025">
    <property type="term" value="P:maltose catabolic process"/>
    <property type="evidence" value="ECO:0007669"/>
    <property type="project" value="UniProtKB-UniPathway"/>
</dbReference>
<dbReference type="FunFam" id="1.50.10.10:FF:000043">
    <property type="entry name" value="Family 65 glycosyl hydrolase"/>
    <property type="match status" value="1"/>
</dbReference>
<dbReference type="FunFam" id="2.60.420.10:FF:000001">
    <property type="entry name" value="Family 65 glycosyl hydrolase"/>
    <property type="match status" value="1"/>
</dbReference>
<dbReference type="Gene3D" id="1.50.10.10">
    <property type="match status" value="1"/>
</dbReference>
<dbReference type="Gene3D" id="2.70.98.40">
    <property type="entry name" value="Glycoside hydrolase, family 65, N-terminal domain"/>
    <property type="match status" value="1"/>
</dbReference>
<dbReference type="Gene3D" id="2.60.420.10">
    <property type="entry name" value="Maltose phosphorylase, domain 3"/>
    <property type="match status" value="1"/>
</dbReference>
<dbReference type="InterPro" id="IPR008928">
    <property type="entry name" value="6-hairpin_glycosidase_sf"/>
</dbReference>
<dbReference type="InterPro" id="IPR012341">
    <property type="entry name" value="6hp_glycosidase-like_sf"/>
</dbReference>
<dbReference type="InterPro" id="IPR011013">
    <property type="entry name" value="Gal_mutarotase_sf_dom"/>
</dbReference>
<dbReference type="InterPro" id="IPR005194">
    <property type="entry name" value="Glyco_hydro_65_C"/>
</dbReference>
<dbReference type="InterPro" id="IPR005195">
    <property type="entry name" value="Glyco_hydro_65_M"/>
</dbReference>
<dbReference type="InterPro" id="IPR005196">
    <property type="entry name" value="Glyco_hydro_65_N"/>
</dbReference>
<dbReference type="InterPro" id="IPR037018">
    <property type="entry name" value="Glyco_hydro_65_N_sf"/>
</dbReference>
<dbReference type="InterPro" id="IPR017045">
    <property type="entry name" value="Malt_Pase/Glycosyl_Hdrlase"/>
</dbReference>
<dbReference type="NCBIfam" id="NF010380">
    <property type="entry name" value="PRK13807.1"/>
    <property type="match status" value="1"/>
</dbReference>
<dbReference type="PANTHER" id="PTHR11051">
    <property type="entry name" value="GLYCOSYL HYDROLASE-RELATED"/>
    <property type="match status" value="1"/>
</dbReference>
<dbReference type="PANTHER" id="PTHR11051:SF14">
    <property type="entry name" value="MALTOSE PHOSPHORYLASE"/>
    <property type="match status" value="1"/>
</dbReference>
<dbReference type="Pfam" id="PF03633">
    <property type="entry name" value="Glyco_hydro_65C"/>
    <property type="match status" value="1"/>
</dbReference>
<dbReference type="Pfam" id="PF03632">
    <property type="entry name" value="Glyco_hydro_65m"/>
    <property type="match status" value="1"/>
</dbReference>
<dbReference type="Pfam" id="PF03636">
    <property type="entry name" value="Glyco_hydro_65N"/>
    <property type="match status" value="1"/>
</dbReference>
<dbReference type="PIRSF" id="PIRSF036289">
    <property type="entry name" value="Glycosyl_hydrolase_malt_phosph"/>
    <property type="match status" value="1"/>
</dbReference>
<dbReference type="SUPFAM" id="SSF74650">
    <property type="entry name" value="Galactose mutarotase-like"/>
    <property type="match status" value="1"/>
</dbReference>
<dbReference type="SUPFAM" id="SSF48208">
    <property type="entry name" value="Six-hairpin glycosidases"/>
    <property type="match status" value="1"/>
</dbReference>
<name>MALPY_BACSU</name>
<evidence type="ECO:0000250" key="1"/>
<evidence type="ECO:0000250" key="2">
    <source>
        <dbReference type="UniProtKB" id="D6XZ22"/>
    </source>
</evidence>
<evidence type="ECO:0000305" key="3"/>
<sequence length="757" mass="88279">MINQRLFEIDEWKIKTNTFNKEHTRLLESLTSLANGYMGVRGNFEEGYSGDSHQGTYIAGVWFPDKTRVGWWKNGYPEYFGKVINAMNFMGIGLYVDGEKIDLHQNPIELFEVELNMKEGILRRSAVVRIQDKTVRIRSERFLSLAVKELCAIHYEAECLTGDAVITLVPYLDGNVANEDSNYQEQFWQEEAKGADSHSGHLAAKTIENPFGTPRFTVLAAMANETEGFVHESFKTTEMYVENRYSYQTKASLKKFVIVTTSRDFREEELLSKAKELLADVVENGYEDAKRRHTDRWKERWAKADIEIKGDEELQQGIRYNIFQLFSTYYGGDARLNIGPKGFTGEKYGGAAYWDTEAYAVPMYLATAEPEVTKNLLLYRYHQLEAAKRNAAKLGMKGALYPMVTFTGDECHNEWEITFEEIHRNGAICYAIYNYINYTGDRNYMEEYGIDVLVAVSRFWADRVHFSKRKNKYMIHGVTGPNEYENNVNNNWYTNVIAAWTLEYTLQSLESISAEKRRHLDVQEVELEVWREIIQHMYYPFSEELQIFVQHDTFLDKDLQTVDELDPAERPLYQNWSWDKILRSNFIKQADVLQGIYLFNDRFTMEEKRRNFEFYEPMTVHESSLSPSVHAILAAELKLEKKALELYKRTARLDLDNYNHDTEEGLHITSMTGSWLAIVHGFAGMRTANETLSFAPFLPKEWDEYSFNINYRNRLINVTVDEKRVIFELVKGEPLHMNVYEEPVVLQGRCERRTPNE</sequence>
<protein>
    <recommendedName>
        <fullName>Maltose phosphorylase</fullName>
        <ecNumber>2.4.1.8</ecNumber>
    </recommendedName>
</protein>
<proteinExistence type="inferred from homology"/>
<accession>O06993</accession>
<gene>
    <name type="primary">mdxK</name>
    <name type="synonym">malK</name>
    <name type="synonym">yvdK</name>
    <name type="ordered locus">BSU34570</name>
</gene>
<reference key="1">
    <citation type="submission" date="1997-04" db="EMBL/GenBank/DDBJ databases">
        <authorList>
            <person name="Denizot F."/>
        </authorList>
    </citation>
    <scope>NUCLEOTIDE SEQUENCE [GENOMIC DNA]</scope>
    <source>
        <strain>168</strain>
    </source>
</reference>
<reference key="2">
    <citation type="journal article" date="1997" name="Nature">
        <title>The complete genome sequence of the Gram-positive bacterium Bacillus subtilis.</title>
        <authorList>
            <person name="Kunst F."/>
            <person name="Ogasawara N."/>
            <person name="Moszer I."/>
            <person name="Albertini A.M."/>
            <person name="Alloni G."/>
            <person name="Azevedo V."/>
            <person name="Bertero M.G."/>
            <person name="Bessieres P."/>
            <person name="Bolotin A."/>
            <person name="Borchert S."/>
            <person name="Borriss R."/>
            <person name="Boursier L."/>
            <person name="Brans A."/>
            <person name="Braun M."/>
            <person name="Brignell S.C."/>
            <person name="Bron S."/>
            <person name="Brouillet S."/>
            <person name="Bruschi C.V."/>
            <person name="Caldwell B."/>
            <person name="Capuano V."/>
            <person name="Carter N.M."/>
            <person name="Choi S.-K."/>
            <person name="Codani J.-J."/>
            <person name="Connerton I.F."/>
            <person name="Cummings N.J."/>
            <person name="Daniel R.A."/>
            <person name="Denizot F."/>
            <person name="Devine K.M."/>
            <person name="Duesterhoeft A."/>
            <person name="Ehrlich S.D."/>
            <person name="Emmerson P.T."/>
            <person name="Entian K.-D."/>
            <person name="Errington J."/>
            <person name="Fabret C."/>
            <person name="Ferrari E."/>
            <person name="Foulger D."/>
            <person name="Fritz C."/>
            <person name="Fujita M."/>
            <person name="Fujita Y."/>
            <person name="Fuma S."/>
            <person name="Galizzi A."/>
            <person name="Galleron N."/>
            <person name="Ghim S.-Y."/>
            <person name="Glaser P."/>
            <person name="Goffeau A."/>
            <person name="Golightly E.J."/>
            <person name="Grandi G."/>
            <person name="Guiseppi G."/>
            <person name="Guy B.J."/>
            <person name="Haga K."/>
            <person name="Haiech J."/>
            <person name="Harwood C.R."/>
            <person name="Henaut A."/>
            <person name="Hilbert H."/>
            <person name="Holsappel S."/>
            <person name="Hosono S."/>
            <person name="Hullo M.-F."/>
            <person name="Itaya M."/>
            <person name="Jones L.-M."/>
            <person name="Joris B."/>
            <person name="Karamata D."/>
            <person name="Kasahara Y."/>
            <person name="Klaerr-Blanchard M."/>
            <person name="Klein C."/>
            <person name="Kobayashi Y."/>
            <person name="Koetter P."/>
            <person name="Koningstein G."/>
            <person name="Krogh S."/>
            <person name="Kumano M."/>
            <person name="Kurita K."/>
            <person name="Lapidus A."/>
            <person name="Lardinois S."/>
            <person name="Lauber J."/>
            <person name="Lazarevic V."/>
            <person name="Lee S.-M."/>
            <person name="Levine A."/>
            <person name="Liu H."/>
            <person name="Masuda S."/>
            <person name="Mauel C."/>
            <person name="Medigue C."/>
            <person name="Medina N."/>
            <person name="Mellado R.P."/>
            <person name="Mizuno M."/>
            <person name="Moestl D."/>
            <person name="Nakai S."/>
            <person name="Noback M."/>
            <person name="Noone D."/>
            <person name="O'Reilly M."/>
            <person name="Ogawa K."/>
            <person name="Ogiwara A."/>
            <person name="Oudega B."/>
            <person name="Park S.-H."/>
            <person name="Parro V."/>
            <person name="Pohl T.M."/>
            <person name="Portetelle D."/>
            <person name="Porwollik S."/>
            <person name="Prescott A.M."/>
            <person name="Presecan E."/>
            <person name="Pujic P."/>
            <person name="Purnelle B."/>
            <person name="Rapoport G."/>
            <person name="Rey M."/>
            <person name="Reynolds S."/>
            <person name="Rieger M."/>
            <person name="Rivolta C."/>
            <person name="Rocha E."/>
            <person name="Roche B."/>
            <person name="Rose M."/>
            <person name="Sadaie Y."/>
            <person name="Sato T."/>
            <person name="Scanlan E."/>
            <person name="Schleich S."/>
            <person name="Schroeter R."/>
            <person name="Scoffone F."/>
            <person name="Sekiguchi J."/>
            <person name="Sekowska A."/>
            <person name="Seror S.J."/>
            <person name="Serror P."/>
            <person name="Shin B.-S."/>
            <person name="Soldo B."/>
            <person name="Sorokin A."/>
            <person name="Tacconi E."/>
            <person name="Takagi T."/>
            <person name="Takahashi H."/>
            <person name="Takemaru K."/>
            <person name="Takeuchi M."/>
            <person name="Tamakoshi A."/>
            <person name="Tanaka T."/>
            <person name="Terpstra P."/>
            <person name="Tognoni A."/>
            <person name="Tosato V."/>
            <person name="Uchiyama S."/>
            <person name="Vandenbol M."/>
            <person name="Vannier F."/>
            <person name="Vassarotti A."/>
            <person name="Viari A."/>
            <person name="Wambutt R."/>
            <person name="Wedler E."/>
            <person name="Wedler H."/>
            <person name="Weitzenegger T."/>
            <person name="Winters P."/>
            <person name="Wipat A."/>
            <person name="Yamamoto H."/>
            <person name="Yamane K."/>
            <person name="Yasumoto K."/>
            <person name="Yata K."/>
            <person name="Yoshida K."/>
            <person name="Yoshikawa H.-F."/>
            <person name="Zumstein E."/>
            <person name="Yoshikawa H."/>
            <person name="Danchin A."/>
        </authorList>
    </citation>
    <scope>NUCLEOTIDE SEQUENCE [LARGE SCALE GENOMIC DNA]</scope>
    <source>
        <strain>168</strain>
    </source>
</reference>
<reference key="3">
    <citation type="journal article" date="2006" name="J. Bacteriol.">
        <title>Maltose and maltodextrin utilization by Bacillus subtilis.</title>
        <authorList>
            <person name="Schoenert S."/>
            <person name="Seitz S."/>
            <person name="Krafft H."/>
            <person name="Feuerbaum E.-A."/>
            <person name="Andernach I."/>
            <person name="Witz G."/>
            <person name="Dahl M.K."/>
        </authorList>
    </citation>
    <scope>PREDICTED FUNCTION</scope>
    <source>
        <strain>168</strain>
    </source>
</reference>
<feature type="chain" id="PRO_0000108018" description="Maltose phosphorylase">
    <location>
        <begin position="1"/>
        <end position="757"/>
    </location>
</feature>
<feature type="active site" description="Proton donor" evidence="2">
    <location>
        <position position="483"/>
    </location>
</feature>
<feature type="binding site" evidence="2">
    <location>
        <begin position="354"/>
        <end position="355"/>
    </location>
    <ligand>
        <name>substrate</name>
    </ligand>
</feature>
<feature type="binding site" evidence="2">
    <location>
        <begin position="588"/>
        <end position="589"/>
    </location>
    <ligand>
        <name>substrate</name>
    </ligand>
</feature>
<keyword id="KW-0119">Carbohydrate metabolism</keyword>
<keyword id="KW-0328">Glycosyltransferase</keyword>
<keyword id="KW-1185">Reference proteome</keyword>
<keyword id="KW-0808">Transferase</keyword>
<organism>
    <name type="scientific">Bacillus subtilis (strain 168)</name>
    <dbReference type="NCBI Taxonomy" id="224308"/>
    <lineage>
        <taxon>Bacteria</taxon>
        <taxon>Bacillati</taxon>
        <taxon>Bacillota</taxon>
        <taxon>Bacilli</taxon>
        <taxon>Bacillales</taxon>
        <taxon>Bacillaceae</taxon>
        <taxon>Bacillus</taxon>
    </lineage>
</organism>